<evidence type="ECO:0000255" key="1">
    <source>
        <dbReference type="HAMAP-Rule" id="MF_01698"/>
    </source>
</evidence>
<sequence>MSAFPPPPIPAPDASRVARVEPTPDVVRGILELGDRARADDGVAPFNEQTRLLLGTEDGPALLVVQGTDGRPIGAAVAARGDGGIEAEIVVDPARRRRGVGRALLDAVLAEAAGSPVSVWAHGDHPGARALAAATGLDRARELLQLRASVAEARTGLGERPMPAGLALSSFTADDADDWVALNARAFASHPEQGRMTRGDLDDRVAEPWFDPALLLLARDADGRLAGFHWLKVEGGQAEVYVLGVDPDRAARGLGSALLAAGLDLLAARGLDEVDLYVEADNAPALALYRRAAFRDAAVDVQYRRA</sequence>
<organism>
    <name type="scientific">Clavibacter michiganensis subsp. michiganensis (strain NCPPB 382)</name>
    <dbReference type="NCBI Taxonomy" id="443906"/>
    <lineage>
        <taxon>Bacteria</taxon>
        <taxon>Bacillati</taxon>
        <taxon>Actinomycetota</taxon>
        <taxon>Actinomycetes</taxon>
        <taxon>Micrococcales</taxon>
        <taxon>Microbacteriaceae</taxon>
        <taxon>Clavibacter</taxon>
    </lineage>
</organism>
<dbReference type="EC" id="2.3.1.189" evidence="1"/>
<dbReference type="EMBL" id="AM711867">
    <property type="protein sequence ID" value="CAN02584.1"/>
    <property type="molecule type" value="Genomic_DNA"/>
</dbReference>
<dbReference type="RefSeq" id="WP_012039191.1">
    <property type="nucleotide sequence ID" value="NC_009480.1"/>
</dbReference>
<dbReference type="SMR" id="A5CTZ8"/>
<dbReference type="KEGG" id="cmi:CMM_2502"/>
<dbReference type="eggNOG" id="COG0454">
    <property type="taxonomic scope" value="Bacteria"/>
</dbReference>
<dbReference type="eggNOG" id="COG0456">
    <property type="taxonomic scope" value="Bacteria"/>
</dbReference>
<dbReference type="HOGENOM" id="CLU_068014_0_0_11"/>
<dbReference type="OrthoDB" id="3208058at2"/>
<dbReference type="Proteomes" id="UP000001564">
    <property type="component" value="Chromosome"/>
</dbReference>
<dbReference type="GO" id="GO:0035447">
    <property type="term" value="F:mycothiol synthase activity"/>
    <property type="evidence" value="ECO:0007669"/>
    <property type="project" value="UniProtKB-UniRule"/>
</dbReference>
<dbReference type="GO" id="GO:0008999">
    <property type="term" value="F:protein-N-terminal-alanine acetyltransferase activity"/>
    <property type="evidence" value="ECO:0007669"/>
    <property type="project" value="TreeGrafter"/>
</dbReference>
<dbReference type="GO" id="GO:0010125">
    <property type="term" value="P:mycothiol biosynthetic process"/>
    <property type="evidence" value="ECO:0007669"/>
    <property type="project" value="UniProtKB-UniRule"/>
</dbReference>
<dbReference type="Gene3D" id="3.40.630.30">
    <property type="match status" value="1"/>
</dbReference>
<dbReference type="HAMAP" id="MF_01698">
    <property type="entry name" value="MshD"/>
    <property type="match status" value="1"/>
</dbReference>
<dbReference type="InterPro" id="IPR016181">
    <property type="entry name" value="Acyl_CoA_acyltransferase"/>
</dbReference>
<dbReference type="InterPro" id="IPR000182">
    <property type="entry name" value="GNAT_dom"/>
</dbReference>
<dbReference type="InterPro" id="IPR050276">
    <property type="entry name" value="MshD_Acetyltransferase"/>
</dbReference>
<dbReference type="InterPro" id="IPR017813">
    <property type="entry name" value="Mycothiol_AcTrfase"/>
</dbReference>
<dbReference type="NCBIfam" id="TIGR03448">
    <property type="entry name" value="mycothiol_MshD"/>
    <property type="match status" value="1"/>
</dbReference>
<dbReference type="PANTHER" id="PTHR43617">
    <property type="entry name" value="L-AMINO ACID N-ACETYLTRANSFERASE"/>
    <property type="match status" value="1"/>
</dbReference>
<dbReference type="PANTHER" id="PTHR43617:SF31">
    <property type="entry name" value="MYCOTHIOL ACETYLTRANSFERASE"/>
    <property type="match status" value="1"/>
</dbReference>
<dbReference type="Pfam" id="PF00583">
    <property type="entry name" value="Acetyltransf_1"/>
    <property type="match status" value="2"/>
</dbReference>
<dbReference type="PIRSF" id="PIRSF021524">
    <property type="entry name" value="MSH_acetyltransferase"/>
    <property type="match status" value="1"/>
</dbReference>
<dbReference type="SUPFAM" id="SSF55729">
    <property type="entry name" value="Acyl-CoA N-acyltransferases (Nat)"/>
    <property type="match status" value="2"/>
</dbReference>
<dbReference type="PROSITE" id="PS51186">
    <property type="entry name" value="GNAT"/>
    <property type="match status" value="2"/>
</dbReference>
<gene>
    <name evidence="1" type="primary">mshD</name>
    <name type="ordered locus">CMM_2502</name>
</gene>
<accession>A5CTZ8</accession>
<keyword id="KW-0012">Acyltransferase</keyword>
<keyword id="KW-0677">Repeat</keyword>
<keyword id="KW-0808">Transferase</keyword>
<reference key="1">
    <citation type="journal article" date="2008" name="J. Bacteriol.">
        <title>The genome sequence of the tomato-pathogenic actinomycete Clavibacter michiganensis subsp. michiganensis NCPPB382 reveals a large island involved in pathogenicity.</title>
        <authorList>
            <person name="Gartemann K.-H."/>
            <person name="Abt B."/>
            <person name="Bekel T."/>
            <person name="Burger A."/>
            <person name="Engemann J."/>
            <person name="Fluegel M."/>
            <person name="Gaigalat L."/>
            <person name="Goesmann A."/>
            <person name="Graefen I."/>
            <person name="Kalinowski J."/>
            <person name="Kaup O."/>
            <person name="Kirchner O."/>
            <person name="Krause L."/>
            <person name="Linke B."/>
            <person name="McHardy A."/>
            <person name="Meyer F."/>
            <person name="Pohle S."/>
            <person name="Rueckert C."/>
            <person name="Schneiker S."/>
            <person name="Zellermann E.-M."/>
            <person name="Puehler A."/>
            <person name="Eichenlaub R."/>
            <person name="Kaiser O."/>
            <person name="Bartels D."/>
        </authorList>
    </citation>
    <scope>NUCLEOTIDE SEQUENCE [LARGE SCALE GENOMIC DNA]</scope>
    <source>
        <strain>NCPPB 382</strain>
    </source>
</reference>
<proteinExistence type="inferred from homology"/>
<feature type="chain" id="PRO_0000400245" description="Mycothiol acetyltransferase">
    <location>
        <begin position="1"/>
        <end position="306"/>
    </location>
</feature>
<feature type="domain" description="N-acetyltransferase 1" evidence="1">
    <location>
        <begin position="17"/>
        <end position="163"/>
    </location>
</feature>
<feature type="domain" description="N-acetyltransferase 2" evidence="1">
    <location>
        <begin position="166"/>
        <end position="306"/>
    </location>
</feature>
<feature type="binding site" evidence="1">
    <location>
        <position position="48"/>
    </location>
    <ligand>
        <name>1D-myo-inositol 2-(L-cysteinylamino)-2-deoxy-alpha-D-glucopyranoside</name>
        <dbReference type="ChEBI" id="CHEBI:58887"/>
    </ligand>
</feature>
<feature type="binding site" evidence="1">
    <location>
        <begin position="89"/>
        <end position="91"/>
    </location>
    <ligand>
        <name>acetyl-CoA</name>
        <dbReference type="ChEBI" id="CHEBI:57288"/>
        <label>1</label>
    </ligand>
</feature>
<feature type="binding site" evidence="1">
    <location>
        <position position="192"/>
    </location>
    <ligand>
        <name>1D-myo-inositol 2-(L-cysteinylamino)-2-deoxy-alpha-D-glucopyranoside</name>
        <dbReference type="ChEBI" id="CHEBI:58887"/>
    </ligand>
</feature>
<feature type="binding site" evidence="1">
    <location>
        <position position="232"/>
    </location>
    <ligand>
        <name>1D-myo-inositol 2-(L-cysteinylamino)-2-deoxy-alpha-D-glucopyranoside</name>
        <dbReference type="ChEBI" id="CHEBI:58887"/>
    </ligand>
</feature>
<feature type="binding site" evidence="1">
    <location>
        <position position="239"/>
    </location>
    <ligand>
        <name>1D-myo-inositol 2-(L-cysteinylamino)-2-deoxy-alpha-D-glucopyranoside</name>
        <dbReference type="ChEBI" id="CHEBI:58887"/>
    </ligand>
</feature>
<feature type="binding site" evidence="1">
    <location>
        <begin position="243"/>
        <end position="245"/>
    </location>
    <ligand>
        <name>acetyl-CoA</name>
        <dbReference type="ChEBI" id="CHEBI:57288"/>
        <label>2</label>
    </ligand>
</feature>
<feature type="binding site" evidence="1">
    <location>
        <begin position="250"/>
        <end position="256"/>
    </location>
    <ligand>
        <name>acetyl-CoA</name>
        <dbReference type="ChEBI" id="CHEBI:57288"/>
        <label>2</label>
    </ligand>
</feature>
<feature type="binding site" evidence="1">
    <location>
        <position position="277"/>
    </location>
    <ligand>
        <name>1D-myo-inositol 2-(L-cysteinylamino)-2-deoxy-alpha-D-glucopyranoside</name>
        <dbReference type="ChEBI" id="CHEBI:58887"/>
    </ligand>
</feature>
<name>MSHD_CLAM3</name>
<comment type="function">
    <text evidence="1">Catalyzes the transfer of acetyl from acetyl-CoA to desacetylmycothiol (Cys-GlcN-Ins) to form mycothiol.</text>
</comment>
<comment type="catalytic activity">
    <reaction evidence="1">
        <text>1D-myo-inositol 2-(L-cysteinylamino)-2-deoxy-alpha-D-glucopyranoside + acetyl-CoA = mycothiol + CoA + H(+)</text>
        <dbReference type="Rhea" id="RHEA:26172"/>
        <dbReference type="ChEBI" id="CHEBI:15378"/>
        <dbReference type="ChEBI" id="CHEBI:16768"/>
        <dbReference type="ChEBI" id="CHEBI:57287"/>
        <dbReference type="ChEBI" id="CHEBI:57288"/>
        <dbReference type="ChEBI" id="CHEBI:58887"/>
        <dbReference type="EC" id="2.3.1.189"/>
    </reaction>
</comment>
<comment type="subunit">
    <text evidence="1">Monomer.</text>
</comment>
<comment type="similarity">
    <text evidence="1">Belongs to the acetyltransferase family. MshD subfamily.</text>
</comment>
<protein>
    <recommendedName>
        <fullName evidence="1">Mycothiol acetyltransferase</fullName>
        <shortName evidence="1">MSH acetyltransferase</shortName>
        <ecNumber evidence="1">2.3.1.189</ecNumber>
    </recommendedName>
    <alternativeName>
        <fullName evidence="1">Mycothiol synthase</fullName>
    </alternativeName>
</protein>